<protein>
    <recommendedName>
        <fullName evidence="1">Tyrosine--tRNA ligase</fullName>
        <ecNumber evidence="1">6.1.1.1</ecNumber>
    </recommendedName>
    <alternativeName>
        <fullName evidence="1">Tyrosyl-tRNA synthetase</fullName>
        <shortName evidence="1">TyrRS</shortName>
    </alternativeName>
</protein>
<accession>Q3ABU4</accession>
<reference key="1">
    <citation type="journal article" date="2005" name="PLoS Genet.">
        <title>Life in hot carbon monoxide: the complete genome sequence of Carboxydothermus hydrogenoformans Z-2901.</title>
        <authorList>
            <person name="Wu M."/>
            <person name="Ren Q."/>
            <person name="Durkin A.S."/>
            <person name="Daugherty S.C."/>
            <person name="Brinkac L.M."/>
            <person name="Dodson R.J."/>
            <person name="Madupu R."/>
            <person name="Sullivan S.A."/>
            <person name="Kolonay J.F."/>
            <person name="Nelson W.C."/>
            <person name="Tallon L.J."/>
            <person name="Jones K.M."/>
            <person name="Ulrich L.E."/>
            <person name="Gonzalez J.M."/>
            <person name="Zhulin I.B."/>
            <person name="Robb F.T."/>
            <person name="Eisen J.A."/>
        </authorList>
    </citation>
    <scope>NUCLEOTIDE SEQUENCE [LARGE SCALE GENOMIC DNA]</scope>
    <source>
        <strain>ATCC BAA-161 / DSM 6008 / Z-2901</strain>
    </source>
</reference>
<gene>
    <name evidence="1" type="primary">tyrS</name>
    <name type="ordered locus">CHY_1561</name>
</gene>
<proteinExistence type="inferred from homology"/>
<evidence type="ECO:0000255" key="1">
    <source>
        <dbReference type="HAMAP-Rule" id="MF_02007"/>
    </source>
</evidence>
<feature type="chain" id="PRO_0000236707" description="Tyrosine--tRNA ligase">
    <location>
        <begin position="1"/>
        <end position="411"/>
    </location>
</feature>
<feature type="domain" description="S4 RNA-binding" evidence="1">
    <location>
        <begin position="347"/>
        <end position="409"/>
    </location>
</feature>
<feature type="short sequence motif" description="'HIGH' region">
    <location>
        <begin position="48"/>
        <end position="57"/>
    </location>
</feature>
<feature type="short sequence motif" description="'KMSKS' region">
    <location>
        <begin position="232"/>
        <end position="236"/>
    </location>
</feature>
<feature type="binding site" evidence="1">
    <location>
        <position position="235"/>
    </location>
    <ligand>
        <name>ATP</name>
        <dbReference type="ChEBI" id="CHEBI:30616"/>
    </ligand>
</feature>
<organism>
    <name type="scientific">Carboxydothermus hydrogenoformans (strain ATCC BAA-161 / DSM 6008 / Z-2901)</name>
    <dbReference type="NCBI Taxonomy" id="246194"/>
    <lineage>
        <taxon>Bacteria</taxon>
        <taxon>Bacillati</taxon>
        <taxon>Bacillota</taxon>
        <taxon>Clostridia</taxon>
        <taxon>Thermoanaerobacterales</taxon>
        <taxon>Thermoanaerobacteraceae</taxon>
        <taxon>Carboxydothermus</taxon>
    </lineage>
</organism>
<keyword id="KW-0030">Aminoacyl-tRNA synthetase</keyword>
<keyword id="KW-0067">ATP-binding</keyword>
<keyword id="KW-0963">Cytoplasm</keyword>
<keyword id="KW-0436">Ligase</keyword>
<keyword id="KW-0547">Nucleotide-binding</keyword>
<keyword id="KW-0648">Protein biosynthesis</keyword>
<keyword id="KW-1185">Reference proteome</keyword>
<keyword id="KW-0694">RNA-binding</keyword>
<dbReference type="EC" id="6.1.1.1" evidence="1"/>
<dbReference type="EMBL" id="CP000141">
    <property type="protein sequence ID" value="ABB14839.1"/>
    <property type="molecule type" value="Genomic_DNA"/>
</dbReference>
<dbReference type="RefSeq" id="WP_011344465.1">
    <property type="nucleotide sequence ID" value="NC_007503.1"/>
</dbReference>
<dbReference type="SMR" id="Q3ABU4"/>
<dbReference type="FunCoup" id="Q3ABU4">
    <property type="interactions" value="74"/>
</dbReference>
<dbReference type="STRING" id="246194.CHY_1561"/>
<dbReference type="KEGG" id="chy:CHY_1561"/>
<dbReference type="eggNOG" id="COG0162">
    <property type="taxonomic scope" value="Bacteria"/>
</dbReference>
<dbReference type="HOGENOM" id="CLU_024003_5_0_9"/>
<dbReference type="InParanoid" id="Q3ABU4"/>
<dbReference type="Proteomes" id="UP000002706">
    <property type="component" value="Chromosome"/>
</dbReference>
<dbReference type="GO" id="GO:0005829">
    <property type="term" value="C:cytosol"/>
    <property type="evidence" value="ECO:0007669"/>
    <property type="project" value="TreeGrafter"/>
</dbReference>
<dbReference type="GO" id="GO:0005524">
    <property type="term" value="F:ATP binding"/>
    <property type="evidence" value="ECO:0007669"/>
    <property type="project" value="UniProtKB-UniRule"/>
</dbReference>
<dbReference type="GO" id="GO:0003723">
    <property type="term" value="F:RNA binding"/>
    <property type="evidence" value="ECO:0007669"/>
    <property type="project" value="UniProtKB-KW"/>
</dbReference>
<dbReference type="GO" id="GO:0004831">
    <property type="term" value="F:tyrosine-tRNA ligase activity"/>
    <property type="evidence" value="ECO:0007669"/>
    <property type="project" value="UniProtKB-UniRule"/>
</dbReference>
<dbReference type="GO" id="GO:0006437">
    <property type="term" value="P:tyrosyl-tRNA aminoacylation"/>
    <property type="evidence" value="ECO:0007669"/>
    <property type="project" value="UniProtKB-UniRule"/>
</dbReference>
<dbReference type="CDD" id="cd00165">
    <property type="entry name" value="S4"/>
    <property type="match status" value="1"/>
</dbReference>
<dbReference type="CDD" id="cd00805">
    <property type="entry name" value="TyrRS_core"/>
    <property type="match status" value="1"/>
</dbReference>
<dbReference type="FunFam" id="1.10.240.10:FF:000006">
    <property type="entry name" value="Tyrosine--tRNA ligase"/>
    <property type="match status" value="1"/>
</dbReference>
<dbReference type="FunFam" id="3.40.50.620:FF:000061">
    <property type="entry name" value="Tyrosine--tRNA ligase"/>
    <property type="match status" value="1"/>
</dbReference>
<dbReference type="Gene3D" id="3.40.50.620">
    <property type="entry name" value="HUPs"/>
    <property type="match status" value="1"/>
</dbReference>
<dbReference type="Gene3D" id="3.10.290.10">
    <property type="entry name" value="RNA-binding S4 domain"/>
    <property type="match status" value="1"/>
</dbReference>
<dbReference type="Gene3D" id="1.10.240.10">
    <property type="entry name" value="Tyrosyl-Transfer RNA Synthetase"/>
    <property type="match status" value="1"/>
</dbReference>
<dbReference type="HAMAP" id="MF_02007">
    <property type="entry name" value="Tyr_tRNA_synth_type2"/>
    <property type="match status" value="1"/>
</dbReference>
<dbReference type="InterPro" id="IPR001412">
    <property type="entry name" value="aa-tRNA-synth_I_CS"/>
</dbReference>
<dbReference type="InterPro" id="IPR002305">
    <property type="entry name" value="aa-tRNA-synth_Ic"/>
</dbReference>
<dbReference type="InterPro" id="IPR014729">
    <property type="entry name" value="Rossmann-like_a/b/a_fold"/>
</dbReference>
<dbReference type="InterPro" id="IPR002942">
    <property type="entry name" value="S4_RNA-bd"/>
</dbReference>
<dbReference type="InterPro" id="IPR036986">
    <property type="entry name" value="S4_RNA-bd_sf"/>
</dbReference>
<dbReference type="InterPro" id="IPR002307">
    <property type="entry name" value="Tyr-tRNA-ligase"/>
</dbReference>
<dbReference type="InterPro" id="IPR024088">
    <property type="entry name" value="Tyr-tRNA-ligase_bac-type"/>
</dbReference>
<dbReference type="InterPro" id="IPR024108">
    <property type="entry name" value="Tyr-tRNA-ligase_bac_2"/>
</dbReference>
<dbReference type="NCBIfam" id="TIGR00234">
    <property type="entry name" value="tyrS"/>
    <property type="match status" value="1"/>
</dbReference>
<dbReference type="PANTHER" id="PTHR11766:SF1">
    <property type="entry name" value="TYROSINE--TRNA LIGASE"/>
    <property type="match status" value="1"/>
</dbReference>
<dbReference type="PANTHER" id="PTHR11766">
    <property type="entry name" value="TYROSYL-TRNA SYNTHETASE"/>
    <property type="match status" value="1"/>
</dbReference>
<dbReference type="Pfam" id="PF01479">
    <property type="entry name" value="S4"/>
    <property type="match status" value="1"/>
</dbReference>
<dbReference type="Pfam" id="PF00579">
    <property type="entry name" value="tRNA-synt_1b"/>
    <property type="match status" value="1"/>
</dbReference>
<dbReference type="PRINTS" id="PR01040">
    <property type="entry name" value="TRNASYNTHTYR"/>
</dbReference>
<dbReference type="SMART" id="SM00363">
    <property type="entry name" value="S4"/>
    <property type="match status" value="1"/>
</dbReference>
<dbReference type="SUPFAM" id="SSF55174">
    <property type="entry name" value="Alpha-L RNA-binding motif"/>
    <property type="match status" value="1"/>
</dbReference>
<dbReference type="SUPFAM" id="SSF52374">
    <property type="entry name" value="Nucleotidylyl transferase"/>
    <property type="match status" value="1"/>
</dbReference>
<dbReference type="PROSITE" id="PS00178">
    <property type="entry name" value="AA_TRNA_LIGASE_I"/>
    <property type="match status" value="1"/>
</dbReference>
<dbReference type="PROSITE" id="PS50889">
    <property type="entry name" value="S4"/>
    <property type="match status" value="1"/>
</dbReference>
<name>SYY_CARHZ</name>
<sequence length="411" mass="46762">MPVDELKRQLEIIKRGVAEIVPEEELVEKLKKSLNEGKPLRVKLGLDPTAPDIHLGHTVVLQKLKQFQSLGHEVIIIIGDFTAQIGDPTGKKETRKQLSWEEVLENAKTYQEQIFKILDPAKTKMVFNSEWLAKLTFADVIKLASKYTVARMLEREDFAKRFKEGQPISIHEFFYPLMQGYDSVALKADIELGGTDQKFNLLMGRTLQKEYGQEPQIAIMMPILEGTDGVQKMSKSLGNYIGINETPQEMFGKIMSIPDTLILRYLELLTSVPMETINEMKIQMETGVLNPRDAKVFLAKEIITQYHSREAADEAEREFIKIFREKELPDEIPEYKVPGELIDGGVVLLPKVLFSAGTVKSISEAKRLISQGAVLVNQEKINDINFVLKPSKEPYTVKVGKRRFLKIIFEK</sequence>
<comment type="function">
    <text evidence="1">Catalyzes the attachment of tyrosine to tRNA(Tyr) in a two-step reaction: tyrosine is first activated by ATP to form Tyr-AMP and then transferred to the acceptor end of tRNA(Tyr).</text>
</comment>
<comment type="catalytic activity">
    <reaction evidence="1">
        <text>tRNA(Tyr) + L-tyrosine + ATP = L-tyrosyl-tRNA(Tyr) + AMP + diphosphate + H(+)</text>
        <dbReference type="Rhea" id="RHEA:10220"/>
        <dbReference type="Rhea" id="RHEA-COMP:9706"/>
        <dbReference type="Rhea" id="RHEA-COMP:9707"/>
        <dbReference type="ChEBI" id="CHEBI:15378"/>
        <dbReference type="ChEBI" id="CHEBI:30616"/>
        <dbReference type="ChEBI" id="CHEBI:33019"/>
        <dbReference type="ChEBI" id="CHEBI:58315"/>
        <dbReference type="ChEBI" id="CHEBI:78442"/>
        <dbReference type="ChEBI" id="CHEBI:78536"/>
        <dbReference type="ChEBI" id="CHEBI:456215"/>
        <dbReference type="EC" id="6.1.1.1"/>
    </reaction>
</comment>
<comment type="subunit">
    <text evidence="1">Homodimer.</text>
</comment>
<comment type="subcellular location">
    <subcellularLocation>
        <location evidence="1">Cytoplasm</location>
    </subcellularLocation>
</comment>
<comment type="similarity">
    <text evidence="1">Belongs to the class-I aminoacyl-tRNA synthetase family. TyrS type 2 subfamily.</text>
</comment>